<organism>
    <name type="scientific">Escherichia coli (strain 55989 / EAEC)</name>
    <dbReference type="NCBI Taxonomy" id="585055"/>
    <lineage>
        <taxon>Bacteria</taxon>
        <taxon>Pseudomonadati</taxon>
        <taxon>Pseudomonadota</taxon>
        <taxon>Gammaproteobacteria</taxon>
        <taxon>Enterobacterales</taxon>
        <taxon>Enterobacteriaceae</taxon>
        <taxon>Escherichia</taxon>
    </lineage>
</organism>
<dbReference type="EC" id="6.3.4.4" evidence="1"/>
<dbReference type="EMBL" id="CU928145">
    <property type="protein sequence ID" value="CAV01653.1"/>
    <property type="molecule type" value="Genomic_DNA"/>
</dbReference>
<dbReference type="RefSeq" id="WP_000527955.1">
    <property type="nucleotide sequence ID" value="NC_011748.1"/>
</dbReference>
<dbReference type="SMR" id="B7LC36"/>
<dbReference type="GeneID" id="75202411"/>
<dbReference type="KEGG" id="eck:EC55989_4732"/>
<dbReference type="HOGENOM" id="CLU_029848_0_0_6"/>
<dbReference type="UniPathway" id="UPA00075">
    <property type="reaction ID" value="UER00335"/>
</dbReference>
<dbReference type="Proteomes" id="UP000000746">
    <property type="component" value="Chromosome"/>
</dbReference>
<dbReference type="GO" id="GO:0005737">
    <property type="term" value="C:cytoplasm"/>
    <property type="evidence" value="ECO:0007669"/>
    <property type="project" value="UniProtKB-SubCell"/>
</dbReference>
<dbReference type="GO" id="GO:0004019">
    <property type="term" value="F:adenylosuccinate synthase activity"/>
    <property type="evidence" value="ECO:0007669"/>
    <property type="project" value="UniProtKB-UniRule"/>
</dbReference>
<dbReference type="GO" id="GO:0005525">
    <property type="term" value="F:GTP binding"/>
    <property type="evidence" value="ECO:0007669"/>
    <property type="project" value="UniProtKB-UniRule"/>
</dbReference>
<dbReference type="GO" id="GO:0000287">
    <property type="term" value="F:magnesium ion binding"/>
    <property type="evidence" value="ECO:0007669"/>
    <property type="project" value="UniProtKB-UniRule"/>
</dbReference>
<dbReference type="GO" id="GO:0044208">
    <property type="term" value="P:'de novo' AMP biosynthetic process"/>
    <property type="evidence" value="ECO:0007669"/>
    <property type="project" value="UniProtKB-UniRule"/>
</dbReference>
<dbReference type="GO" id="GO:0046040">
    <property type="term" value="P:IMP metabolic process"/>
    <property type="evidence" value="ECO:0007669"/>
    <property type="project" value="TreeGrafter"/>
</dbReference>
<dbReference type="CDD" id="cd03108">
    <property type="entry name" value="AdSS"/>
    <property type="match status" value="1"/>
</dbReference>
<dbReference type="FunFam" id="1.10.300.10:FF:000001">
    <property type="entry name" value="Adenylosuccinate synthetase"/>
    <property type="match status" value="1"/>
</dbReference>
<dbReference type="FunFam" id="3.90.170.10:FF:000001">
    <property type="entry name" value="Adenylosuccinate synthetase"/>
    <property type="match status" value="1"/>
</dbReference>
<dbReference type="Gene3D" id="3.40.440.10">
    <property type="entry name" value="Adenylosuccinate Synthetase, subunit A, domain 1"/>
    <property type="match status" value="1"/>
</dbReference>
<dbReference type="Gene3D" id="1.10.300.10">
    <property type="entry name" value="Adenylosuccinate Synthetase, subunit A, domain 2"/>
    <property type="match status" value="1"/>
</dbReference>
<dbReference type="Gene3D" id="3.90.170.10">
    <property type="entry name" value="Adenylosuccinate Synthetase, subunit A, domain 3"/>
    <property type="match status" value="1"/>
</dbReference>
<dbReference type="HAMAP" id="MF_00011">
    <property type="entry name" value="Adenylosucc_synth"/>
    <property type="match status" value="1"/>
</dbReference>
<dbReference type="InterPro" id="IPR018220">
    <property type="entry name" value="Adenylosuccin_syn_GTP-bd"/>
</dbReference>
<dbReference type="InterPro" id="IPR033128">
    <property type="entry name" value="Adenylosuccin_syn_Lys_AS"/>
</dbReference>
<dbReference type="InterPro" id="IPR042109">
    <property type="entry name" value="Adenylosuccinate_synth_dom1"/>
</dbReference>
<dbReference type="InterPro" id="IPR042110">
    <property type="entry name" value="Adenylosuccinate_synth_dom2"/>
</dbReference>
<dbReference type="InterPro" id="IPR042111">
    <property type="entry name" value="Adenylosuccinate_synth_dom3"/>
</dbReference>
<dbReference type="InterPro" id="IPR001114">
    <property type="entry name" value="Adenylosuccinate_synthetase"/>
</dbReference>
<dbReference type="InterPro" id="IPR027417">
    <property type="entry name" value="P-loop_NTPase"/>
</dbReference>
<dbReference type="NCBIfam" id="NF002223">
    <property type="entry name" value="PRK01117.1"/>
    <property type="match status" value="1"/>
</dbReference>
<dbReference type="NCBIfam" id="TIGR00184">
    <property type="entry name" value="purA"/>
    <property type="match status" value="1"/>
</dbReference>
<dbReference type="PANTHER" id="PTHR11846">
    <property type="entry name" value="ADENYLOSUCCINATE SYNTHETASE"/>
    <property type="match status" value="1"/>
</dbReference>
<dbReference type="PANTHER" id="PTHR11846:SF0">
    <property type="entry name" value="ADENYLOSUCCINATE SYNTHETASE"/>
    <property type="match status" value="1"/>
</dbReference>
<dbReference type="Pfam" id="PF00709">
    <property type="entry name" value="Adenylsucc_synt"/>
    <property type="match status" value="1"/>
</dbReference>
<dbReference type="SMART" id="SM00788">
    <property type="entry name" value="Adenylsucc_synt"/>
    <property type="match status" value="1"/>
</dbReference>
<dbReference type="SUPFAM" id="SSF52540">
    <property type="entry name" value="P-loop containing nucleoside triphosphate hydrolases"/>
    <property type="match status" value="1"/>
</dbReference>
<dbReference type="PROSITE" id="PS01266">
    <property type="entry name" value="ADENYLOSUCCIN_SYN_1"/>
    <property type="match status" value="1"/>
</dbReference>
<dbReference type="PROSITE" id="PS00513">
    <property type="entry name" value="ADENYLOSUCCIN_SYN_2"/>
    <property type="match status" value="1"/>
</dbReference>
<protein>
    <recommendedName>
        <fullName evidence="1">Adenylosuccinate synthetase</fullName>
        <shortName evidence="1">AMPSase</shortName>
        <shortName evidence="1">AdSS</shortName>
        <ecNumber evidence="1">6.3.4.4</ecNumber>
    </recommendedName>
    <alternativeName>
        <fullName evidence="1">IMP--aspartate ligase</fullName>
    </alternativeName>
</protein>
<accession>B7LC36</accession>
<reference key="1">
    <citation type="journal article" date="2009" name="PLoS Genet.">
        <title>Organised genome dynamics in the Escherichia coli species results in highly diverse adaptive paths.</title>
        <authorList>
            <person name="Touchon M."/>
            <person name="Hoede C."/>
            <person name="Tenaillon O."/>
            <person name="Barbe V."/>
            <person name="Baeriswyl S."/>
            <person name="Bidet P."/>
            <person name="Bingen E."/>
            <person name="Bonacorsi S."/>
            <person name="Bouchier C."/>
            <person name="Bouvet O."/>
            <person name="Calteau A."/>
            <person name="Chiapello H."/>
            <person name="Clermont O."/>
            <person name="Cruveiller S."/>
            <person name="Danchin A."/>
            <person name="Diard M."/>
            <person name="Dossat C."/>
            <person name="Karoui M.E."/>
            <person name="Frapy E."/>
            <person name="Garry L."/>
            <person name="Ghigo J.M."/>
            <person name="Gilles A.M."/>
            <person name="Johnson J."/>
            <person name="Le Bouguenec C."/>
            <person name="Lescat M."/>
            <person name="Mangenot S."/>
            <person name="Martinez-Jehanne V."/>
            <person name="Matic I."/>
            <person name="Nassif X."/>
            <person name="Oztas S."/>
            <person name="Petit M.A."/>
            <person name="Pichon C."/>
            <person name="Rouy Z."/>
            <person name="Ruf C.S."/>
            <person name="Schneider D."/>
            <person name="Tourret J."/>
            <person name="Vacherie B."/>
            <person name="Vallenet D."/>
            <person name="Medigue C."/>
            <person name="Rocha E.P.C."/>
            <person name="Denamur E."/>
        </authorList>
    </citation>
    <scope>NUCLEOTIDE SEQUENCE [LARGE SCALE GENOMIC DNA]</scope>
    <source>
        <strain>55989 / EAEC</strain>
    </source>
</reference>
<feature type="chain" id="PRO_1000194751" description="Adenylosuccinate synthetase">
    <location>
        <begin position="1"/>
        <end position="432"/>
    </location>
</feature>
<feature type="active site" description="Proton acceptor" evidence="1">
    <location>
        <position position="14"/>
    </location>
</feature>
<feature type="active site" description="Proton donor" evidence="1">
    <location>
        <position position="42"/>
    </location>
</feature>
<feature type="binding site" evidence="1">
    <location>
        <begin position="13"/>
        <end position="19"/>
    </location>
    <ligand>
        <name>GTP</name>
        <dbReference type="ChEBI" id="CHEBI:37565"/>
    </ligand>
</feature>
<feature type="binding site" description="in other chain" evidence="1">
    <location>
        <begin position="14"/>
        <end position="17"/>
    </location>
    <ligand>
        <name>IMP</name>
        <dbReference type="ChEBI" id="CHEBI:58053"/>
        <note>ligand shared between dimeric partners</note>
    </ligand>
</feature>
<feature type="binding site" evidence="1">
    <location>
        <position position="14"/>
    </location>
    <ligand>
        <name>Mg(2+)</name>
        <dbReference type="ChEBI" id="CHEBI:18420"/>
    </ligand>
</feature>
<feature type="binding site" description="in other chain" evidence="1">
    <location>
        <begin position="39"/>
        <end position="42"/>
    </location>
    <ligand>
        <name>IMP</name>
        <dbReference type="ChEBI" id="CHEBI:58053"/>
        <note>ligand shared between dimeric partners</note>
    </ligand>
</feature>
<feature type="binding site" evidence="1">
    <location>
        <begin position="41"/>
        <end position="43"/>
    </location>
    <ligand>
        <name>GTP</name>
        <dbReference type="ChEBI" id="CHEBI:37565"/>
    </ligand>
</feature>
<feature type="binding site" evidence="1">
    <location>
        <position position="41"/>
    </location>
    <ligand>
        <name>Mg(2+)</name>
        <dbReference type="ChEBI" id="CHEBI:18420"/>
    </ligand>
</feature>
<feature type="binding site" description="in other chain" evidence="1">
    <location>
        <position position="130"/>
    </location>
    <ligand>
        <name>IMP</name>
        <dbReference type="ChEBI" id="CHEBI:58053"/>
        <note>ligand shared between dimeric partners</note>
    </ligand>
</feature>
<feature type="binding site" evidence="1">
    <location>
        <position position="144"/>
    </location>
    <ligand>
        <name>IMP</name>
        <dbReference type="ChEBI" id="CHEBI:58053"/>
        <note>ligand shared between dimeric partners</note>
    </ligand>
</feature>
<feature type="binding site" description="in other chain" evidence="1">
    <location>
        <position position="225"/>
    </location>
    <ligand>
        <name>IMP</name>
        <dbReference type="ChEBI" id="CHEBI:58053"/>
        <note>ligand shared between dimeric partners</note>
    </ligand>
</feature>
<feature type="binding site" description="in other chain" evidence="1">
    <location>
        <position position="240"/>
    </location>
    <ligand>
        <name>IMP</name>
        <dbReference type="ChEBI" id="CHEBI:58053"/>
        <note>ligand shared between dimeric partners</note>
    </ligand>
</feature>
<feature type="binding site" evidence="1">
    <location>
        <begin position="300"/>
        <end position="306"/>
    </location>
    <ligand>
        <name>substrate</name>
    </ligand>
</feature>
<feature type="binding site" description="in other chain" evidence="1">
    <location>
        <position position="304"/>
    </location>
    <ligand>
        <name>IMP</name>
        <dbReference type="ChEBI" id="CHEBI:58053"/>
        <note>ligand shared between dimeric partners</note>
    </ligand>
</feature>
<feature type="binding site" evidence="1">
    <location>
        <position position="306"/>
    </location>
    <ligand>
        <name>GTP</name>
        <dbReference type="ChEBI" id="CHEBI:37565"/>
    </ligand>
</feature>
<feature type="binding site" evidence="1">
    <location>
        <begin position="332"/>
        <end position="334"/>
    </location>
    <ligand>
        <name>GTP</name>
        <dbReference type="ChEBI" id="CHEBI:37565"/>
    </ligand>
</feature>
<feature type="binding site" evidence="1">
    <location>
        <begin position="415"/>
        <end position="417"/>
    </location>
    <ligand>
        <name>GTP</name>
        <dbReference type="ChEBI" id="CHEBI:37565"/>
    </ligand>
</feature>
<keyword id="KW-0963">Cytoplasm</keyword>
<keyword id="KW-0342">GTP-binding</keyword>
<keyword id="KW-0436">Ligase</keyword>
<keyword id="KW-0460">Magnesium</keyword>
<keyword id="KW-0479">Metal-binding</keyword>
<keyword id="KW-0547">Nucleotide-binding</keyword>
<keyword id="KW-0658">Purine biosynthesis</keyword>
<keyword id="KW-1185">Reference proteome</keyword>
<name>PURA_ECO55</name>
<sequence>MGNNVVVLGTQWGDEGKGKIVDLLTERAKYVVRYQGGHNAGHTLVINGEKTVLHLIPSGILRENVTSIIGNGVVLSPAALMKEMKELEDRGIPVRERLLLSEACPLILDYHVALDNAREKARGAKAIGTTGRGIGPAYEDKVARRGLRVGDLFDKETFAEKLKEVMEYHNFQLVNYYKAEAVDYQKVLDDTMAVADILTSMVVDVSDLLDQARQRGDFVMFEGAQGTLLDIDHGTYPYVTSSNTTAGGVATGSGLGPRYVDYVLGILKAYSTRVGAGPFPTELFDETGEFLCKQGNEFGATTGRRRRTGWLDTVAVRRAVQLNSLSGFCLTKLDVLDGLKEVKLCVAYRMPDGREVTTTPLAADDWKGVEPIYETMPGWSESTFGVKDRSGLPQAALNYIKRIEELTGVPIDIISTGPDRTETMILRDPFDA</sequence>
<gene>
    <name evidence="1" type="primary">purA</name>
    <name type="ordered locus">EC55989_4732</name>
</gene>
<evidence type="ECO:0000255" key="1">
    <source>
        <dbReference type="HAMAP-Rule" id="MF_00011"/>
    </source>
</evidence>
<proteinExistence type="inferred from homology"/>
<comment type="function">
    <text evidence="1">Plays an important role in the de novo pathway of purine nucleotide biosynthesis. Catalyzes the first committed step in the biosynthesis of AMP from IMP.</text>
</comment>
<comment type="catalytic activity">
    <reaction evidence="1">
        <text>IMP + L-aspartate + GTP = N(6)-(1,2-dicarboxyethyl)-AMP + GDP + phosphate + 2 H(+)</text>
        <dbReference type="Rhea" id="RHEA:15753"/>
        <dbReference type="ChEBI" id="CHEBI:15378"/>
        <dbReference type="ChEBI" id="CHEBI:29991"/>
        <dbReference type="ChEBI" id="CHEBI:37565"/>
        <dbReference type="ChEBI" id="CHEBI:43474"/>
        <dbReference type="ChEBI" id="CHEBI:57567"/>
        <dbReference type="ChEBI" id="CHEBI:58053"/>
        <dbReference type="ChEBI" id="CHEBI:58189"/>
        <dbReference type="EC" id="6.3.4.4"/>
    </reaction>
</comment>
<comment type="cofactor">
    <cofactor evidence="1">
        <name>Mg(2+)</name>
        <dbReference type="ChEBI" id="CHEBI:18420"/>
    </cofactor>
    <text evidence="1">Binds 1 Mg(2+) ion per subunit.</text>
</comment>
<comment type="pathway">
    <text evidence="1">Purine metabolism; AMP biosynthesis via de novo pathway; AMP from IMP: step 1/2.</text>
</comment>
<comment type="subunit">
    <text evidence="1">Homodimer.</text>
</comment>
<comment type="subcellular location">
    <subcellularLocation>
        <location evidence="1">Cytoplasm</location>
    </subcellularLocation>
</comment>
<comment type="similarity">
    <text evidence="1">Belongs to the adenylosuccinate synthetase family.</text>
</comment>